<name>Y701_RICCN</name>
<sequence>MHKNTHTKPDVNFYDKSGKTPLDWYSDYNATKIVETLIKNGGNVSSVYSRCSYS</sequence>
<organism>
    <name type="scientific">Rickettsia conorii (strain ATCC VR-613 / Malish 7)</name>
    <dbReference type="NCBI Taxonomy" id="272944"/>
    <lineage>
        <taxon>Bacteria</taxon>
        <taxon>Pseudomonadati</taxon>
        <taxon>Pseudomonadota</taxon>
        <taxon>Alphaproteobacteria</taxon>
        <taxon>Rickettsiales</taxon>
        <taxon>Rickettsiaceae</taxon>
        <taxon>Rickettsieae</taxon>
        <taxon>Rickettsia</taxon>
        <taxon>spotted fever group</taxon>
    </lineage>
</organism>
<keyword id="KW-0040">ANK repeat</keyword>
<protein>
    <recommendedName>
        <fullName>Putative ankyrin repeat protein RC0701</fullName>
    </recommendedName>
</protein>
<feature type="chain" id="PRO_0000280928" description="Putative ankyrin repeat protein RC0701">
    <location>
        <begin position="1"/>
        <end position="54"/>
    </location>
</feature>
<feature type="repeat" description="ANK">
    <location>
        <begin position="17"/>
        <end position="46"/>
    </location>
</feature>
<gene>
    <name type="ordered locus">RC0701</name>
</gene>
<accession>Q92HS0</accession>
<proteinExistence type="predicted"/>
<dbReference type="EMBL" id="AE006914">
    <property type="protein sequence ID" value="AAL03239.1"/>
    <property type="molecule type" value="Genomic_DNA"/>
</dbReference>
<dbReference type="PIR" id="E97787">
    <property type="entry name" value="E97787"/>
</dbReference>
<dbReference type="RefSeq" id="WP_010977322.1">
    <property type="nucleotide sequence ID" value="NC_003103.1"/>
</dbReference>
<dbReference type="SMR" id="Q92HS0"/>
<dbReference type="GeneID" id="69247915"/>
<dbReference type="KEGG" id="rco:RC0701"/>
<dbReference type="PATRIC" id="fig|272944.4.peg.797"/>
<dbReference type="HOGENOM" id="CLU_3047508_0_0_5"/>
<dbReference type="Proteomes" id="UP000000816">
    <property type="component" value="Chromosome"/>
</dbReference>
<dbReference type="Gene3D" id="1.25.40.20">
    <property type="entry name" value="Ankyrin repeat-containing domain"/>
    <property type="match status" value="1"/>
</dbReference>
<dbReference type="InterPro" id="IPR002110">
    <property type="entry name" value="Ankyrin_rpt"/>
</dbReference>
<dbReference type="InterPro" id="IPR036770">
    <property type="entry name" value="Ankyrin_rpt-contain_sf"/>
</dbReference>
<dbReference type="SUPFAM" id="SSF48403">
    <property type="entry name" value="Ankyrin repeat"/>
    <property type="match status" value="1"/>
</dbReference>
<dbReference type="PROSITE" id="PS50297">
    <property type="entry name" value="ANK_REP_REGION"/>
    <property type="match status" value="1"/>
</dbReference>
<dbReference type="PROSITE" id="PS50088">
    <property type="entry name" value="ANK_REPEAT"/>
    <property type="match status" value="1"/>
</dbReference>
<reference key="1">
    <citation type="journal article" date="2001" name="Science">
        <title>Mechanisms of evolution in Rickettsia conorii and R. prowazekii.</title>
        <authorList>
            <person name="Ogata H."/>
            <person name="Audic S."/>
            <person name="Renesto-Audiffren P."/>
            <person name="Fournier P.-E."/>
            <person name="Barbe V."/>
            <person name="Samson D."/>
            <person name="Roux V."/>
            <person name="Cossart P."/>
            <person name="Weissenbach J."/>
            <person name="Claverie J.-M."/>
            <person name="Raoult D."/>
        </authorList>
    </citation>
    <scope>NUCLEOTIDE SEQUENCE [LARGE SCALE GENOMIC DNA]</scope>
    <source>
        <strain>ATCC VR-613 / Malish 7</strain>
    </source>
</reference>